<accession>Q4R1J6</accession>
<accession>Q5HZ94</accession>
<accession>Q8AXI6</accession>
<dbReference type="EMBL" id="AF442492">
    <property type="protein sequence ID" value="AAN76690.1"/>
    <property type="molecule type" value="mRNA"/>
</dbReference>
<dbReference type="EMBL" id="AB197248">
    <property type="protein sequence ID" value="BAE02678.1"/>
    <property type="molecule type" value="mRNA"/>
</dbReference>
<dbReference type="EMBL" id="BC089127">
    <property type="protein sequence ID" value="AAH89127.1"/>
    <property type="status" value="ALT_INIT"/>
    <property type="molecule type" value="mRNA"/>
</dbReference>
<dbReference type="RefSeq" id="NP_001082350.1">
    <property type="nucleotide sequence ID" value="NM_001088881.1"/>
</dbReference>
<dbReference type="SMR" id="Q4R1J6"/>
<dbReference type="BioGRID" id="99750">
    <property type="interactions" value="1"/>
</dbReference>
<dbReference type="MEROPS" id="I32.005"/>
<dbReference type="GeneID" id="398418"/>
<dbReference type="KEGG" id="xla:398418"/>
<dbReference type="AGR" id="Xenbase:XB-GENE-5851077"/>
<dbReference type="CTD" id="398418"/>
<dbReference type="Xenbase" id="XB-GENE-5851077">
    <property type="gene designation" value="birc5.L"/>
</dbReference>
<dbReference type="OMA" id="YMLEMTR"/>
<dbReference type="OrthoDB" id="2196114at2759"/>
<dbReference type="Proteomes" id="UP000186698">
    <property type="component" value="Chromosome 2L"/>
</dbReference>
<dbReference type="Bgee" id="398418">
    <property type="expression patterns" value="Expressed in egg cell and 9 other cell types or tissues"/>
</dbReference>
<dbReference type="GO" id="GO:0005694">
    <property type="term" value="C:chromosome"/>
    <property type="evidence" value="ECO:0000250"/>
    <property type="project" value="UniProtKB"/>
</dbReference>
<dbReference type="GO" id="GO:0032133">
    <property type="term" value="C:chromosome passenger complex"/>
    <property type="evidence" value="ECO:0000250"/>
    <property type="project" value="UniProtKB"/>
</dbReference>
<dbReference type="GO" id="GO:0005737">
    <property type="term" value="C:cytoplasm"/>
    <property type="evidence" value="ECO:0000318"/>
    <property type="project" value="GO_Central"/>
</dbReference>
<dbReference type="GO" id="GO:0000776">
    <property type="term" value="C:kinetochore"/>
    <property type="evidence" value="ECO:0000250"/>
    <property type="project" value="UniProtKB"/>
</dbReference>
<dbReference type="GO" id="GO:0030496">
    <property type="term" value="C:midbody"/>
    <property type="evidence" value="ECO:0000250"/>
    <property type="project" value="UniProtKB"/>
</dbReference>
<dbReference type="GO" id="GO:0005634">
    <property type="term" value="C:nucleus"/>
    <property type="evidence" value="ECO:0000250"/>
    <property type="project" value="UniProtKB"/>
</dbReference>
<dbReference type="GO" id="GO:0051233">
    <property type="term" value="C:spindle midzone"/>
    <property type="evidence" value="ECO:0000318"/>
    <property type="project" value="GO_Central"/>
</dbReference>
<dbReference type="GO" id="GO:0046872">
    <property type="term" value="F:metal ion binding"/>
    <property type="evidence" value="ECO:0007669"/>
    <property type="project" value="UniProtKB-KW"/>
</dbReference>
<dbReference type="GO" id="GO:0031267">
    <property type="term" value="F:small GTPase binding"/>
    <property type="evidence" value="ECO:0000250"/>
    <property type="project" value="UniProtKB"/>
</dbReference>
<dbReference type="GO" id="GO:0007059">
    <property type="term" value="P:chromosome segregation"/>
    <property type="evidence" value="ECO:0000318"/>
    <property type="project" value="GO_Central"/>
</dbReference>
<dbReference type="GO" id="GO:0000281">
    <property type="term" value="P:mitotic cytokinesis"/>
    <property type="evidence" value="ECO:0000318"/>
    <property type="project" value="GO_Central"/>
</dbReference>
<dbReference type="GO" id="GO:0007052">
    <property type="term" value="P:mitotic spindle organization"/>
    <property type="evidence" value="ECO:0000318"/>
    <property type="project" value="GO_Central"/>
</dbReference>
<dbReference type="GO" id="GO:0043066">
    <property type="term" value="P:negative regulation of apoptotic process"/>
    <property type="evidence" value="ECO:0000250"/>
    <property type="project" value="UniProtKB"/>
</dbReference>
<dbReference type="GO" id="GO:0045892">
    <property type="term" value="P:negative regulation of DNA-templated transcription"/>
    <property type="evidence" value="ECO:0000250"/>
    <property type="project" value="UniProtKB"/>
</dbReference>
<dbReference type="GO" id="GO:0051225">
    <property type="term" value="P:spindle assembly"/>
    <property type="evidence" value="ECO:0000250"/>
    <property type="project" value="UniProtKB"/>
</dbReference>
<dbReference type="CDD" id="cd00022">
    <property type="entry name" value="BIR"/>
    <property type="match status" value="1"/>
</dbReference>
<dbReference type="FunFam" id="1.10.1170.10:FF:000009">
    <property type="entry name" value="Baculoviral IAP repeat-containing protein 5"/>
    <property type="match status" value="1"/>
</dbReference>
<dbReference type="Gene3D" id="1.10.1170.10">
    <property type="entry name" value="Inhibitor Of Apoptosis Protein (2mihbC-IAP-1), Chain A"/>
    <property type="match status" value="1"/>
</dbReference>
<dbReference type="InterPro" id="IPR051190">
    <property type="entry name" value="Baculoviral_IAP"/>
</dbReference>
<dbReference type="InterPro" id="IPR001370">
    <property type="entry name" value="BIR_rpt"/>
</dbReference>
<dbReference type="PANTHER" id="PTHR46771:SF2">
    <property type="entry name" value="BACULOVIRAL IAP REPEAT-CONTAINING PROTEIN 5.1"/>
    <property type="match status" value="1"/>
</dbReference>
<dbReference type="PANTHER" id="PTHR46771">
    <property type="entry name" value="DETERIN"/>
    <property type="match status" value="1"/>
</dbReference>
<dbReference type="Pfam" id="PF00653">
    <property type="entry name" value="BIR"/>
    <property type="match status" value="1"/>
</dbReference>
<dbReference type="SMART" id="SM00238">
    <property type="entry name" value="BIR"/>
    <property type="match status" value="1"/>
</dbReference>
<dbReference type="SUPFAM" id="SSF57924">
    <property type="entry name" value="Inhibitor of apoptosis (IAP) repeat"/>
    <property type="match status" value="1"/>
</dbReference>
<dbReference type="PROSITE" id="PS50143">
    <property type="entry name" value="BIR_REPEAT_2"/>
    <property type="match status" value="1"/>
</dbReference>
<keyword id="KW-0131">Cell cycle</keyword>
<keyword id="KW-0132">Cell division</keyword>
<keyword id="KW-0137">Centromere</keyword>
<keyword id="KW-0158">Chromosome</keyword>
<keyword id="KW-0159">Chromosome partition</keyword>
<keyword id="KW-0963">Cytoplasm</keyword>
<keyword id="KW-0206">Cytoskeleton</keyword>
<keyword id="KW-0479">Metal-binding</keyword>
<keyword id="KW-0498">Mitosis</keyword>
<keyword id="KW-0539">Nucleus</keyword>
<keyword id="KW-0597">Phosphoprotein</keyword>
<keyword id="KW-1185">Reference proteome</keyword>
<keyword id="KW-0832">Ubl conjugation</keyword>
<keyword id="KW-0862">Zinc</keyword>
<comment type="function">
    <text evidence="1 7">Component of the chromosomal passenger complex (CPC), a complex that acts as a key regulator of mitosis. The CPC complex has essential functions at the centromere in ensuring correct chromosome alignment and segregation and is required for chromatin-induced microtubule stabilization and spindle assembly. Stimulates the mitotic kinase activity of aurkb/aurora-B in the CPC. Does not appear to exhibit anti-apoptotic activity (By similarity). CPC. Does not appear to exhibit anti-apoptotic activity.</text>
</comment>
<comment type="subunit">
    <text evidence="1">Component of the CPC at least composed of survivin/birc5, incenp, cdca8/borealin and/or cdca9/dasra-A, and aurkb/aurora-B. Interacts directly with incenp (via N-terminus), and may weakly interact with aurkb (via N-terminus) to stabilize the complex. Interacts with GTP-bound ran in both the S and M phases of the cell cycle. Also found in a complex with ubiquitin-mediated signaling proteins including at least usp9x/xFAM, nploc4/npl4 and ufd1 (By similarity).</text>
</comment>
<comment type="subcellular location">
    <subcellularLocation>
        <location evidence="2">Cytoplasm</location>
    </subcellularLocation>
    <subcellularLocation>
        <location evidence="2">Nucleus</location>
    </subcellularLocation>
    <subcellularLocation>
        <location evidence="2">Chromosome</location>
        <location evidence="2">Centromere</location>
    </subcellularLocation>
    <subcellularLocation>
        <location evidence="1">Cytoplasm</location>
        <location evidence="1">Cytoskeleton</location>
        <location evidence="1">Spindle</location>
    </subcellularLocation>
    <text evidence="2">Localizes on chromosome arms and inner centromeres from prophase through metaphase and then transferring to the spindle midzone and midbody from anaphase through cytokinesis.</text>
</comment>
<comment type="developmental stage">
    <text evidence="6 8">Expressed maternally. Expressed in the earliest stages of oocytes, and accumulates during oogenesis. Also present in early embryos with expression declining rapidly after the onset of zygotic transcription at the mid-blastula transition (MBT). Although PubMed:12454937 conclude that, with the exception of the ovary, expression is absent in adults, PubMed:16759290 suggest that expression is adult-specific and is absent in embryonic and tadpole stages between gastrulation and metamorphosis.</text>
</comment>
<comment type="domain">
    <text evidence="3">C-terminus is required for spindle assembly.</text>
</comment>
<comment type="PTM">
    <text evidence="2">Ubiquitination is required for centrosome-targeting.</text>
</comment>
<comment type="similarity">
    <text evidence="4">Belongs to the IAP family.</text>
</comment>
<comment type="sequence caution" evidence="11">
    <conflict type="erroneous initiation">
        <sequence resource="EMBL-CDS" id="AAH89127"/>
    </conflict>
    <text>Extended N-terminus.</text>
</comment>
<organism>
    <name type="scientific">Xenopus laevis</name>
    <name type="common">African clawed frog</name>
    <dbReference type="NCBI Taxonomy" id="8355"/>
    <lineage>
        <taxon>Eukaryota</taxon>
        <taxon>Metazoa</taxon>
        <taxon>Chordata</taxon>
        <taxon>Craniata</taxon>
        <taxon>Vertebrata</taxon>
        <taxon>Euteleostomi</taxon>
        <taxon>Amphibia</taxon>
        <taxon>Batrachia</taxon>
        <taxon>Anura</taxon>
        <taxon>Pipoidea</taxon>
        <taxon>Pipidae</taxon>
        <taxon>Xenopodinae</taxon>
        <taxon>Xenopus</taxon>
        <taxon>Xenopus</taxon>
    </lineage>
</organism>
<feature type="chain" id="PRO_0000382462" description="Baculoviral IAP repeat-containing protein 5.1-B">
    <location>
        <begin position="1"/>
        <end position="160"/>
    </location>
</feature>
<feature type="repeat" description="BIR" evidence="4">
    <location>
        <begin position="13"/>
        <end position="83"/>
    </location>
</feature>
<feature type="binding site" evidence="2 5">
    <location>
        <position position="66"/>
    </location>
    <ligand>
        <name>Zn(2+)</name>
        <dbReference type="ChEBI" id="CHEBI:29105"/>
    </ligand>
</feature>
<feature type="binding site" evidence="2 5">
    <location>
        <position position="69"/>
    </location>
    <ligand>
        <name>Zn(2+)</name>
        <dbReference type="ChEBI" id="CHEBI:29105"/>
    </ligand>
</feature>
<feature type="binding site" evidence="2 5">
    <location>
        <position position="86"/>
    </location>
    <ligand>
        <name>Zn(2+)</name>
        <dbReference type="ChEBI" id="CHEBI:29105"/>
    </ligand>
</feature>
<feature type="binding site" evidence="2 5">
    <location>
        <position position="93"/>
    </location>
    <ligand>
        <name>Zn(2+)</name>
        <dbReference type="ChEBI" id="CHEBI:29105"/>
    </ligand>
</feature>
<feature type="modified residue" description="Phosphothreonine; by CDK1" evidence="1">
    <location>
        <position position="43"/>
    </location>
</feature>
<feature type="sequence conflict" description="In Ref. 2." evidence="11" ref="2">
    <location>
        <position position="20"/>
    </location>
</feature>
<feature type="sequence conflict" description="In Ref. 1; AAN76690." evidence="11" ref="1">
    <original>Q</original>
    <variation>H</variation>
    <location>
        <position position="153"/>
    </location>
</feature>
<proteinExistence type="evidence at transcript level"/>
<protein>
    <recommendedName>
        <fullName>Baculoviral IAP repeat-containing protein 5.1-B</fullName>
    </recommendedName>
    <alternativeName>
        <fullName evidence="9">Survivin1-B</fullName>
        <shortName evidence="13">Survivin</shortName>
        <shortName evidence="14">XSurvivin1B</shortName>
    </alternativeName>
    <alternativeName>
        <fullName evidence="10">xL_Survivin2</fullName>
        <shortName evidence="10">Su2</shortName>
    </alternativeName>
</protein>
<name>BI51B_XENLA</name>
<evidence type="ECO:0000250" key="1"/>
<evidence type="ECO:0000250" key="2">
    <source>
        <dbReference type="UniProtKB" id="O15392"/>
    </source>
</evidence>
<evidence type="ECO:0000250" key="3">
    <source>
        <dbReference type="UniProtKB" id="Q8JGN5"/>
    </source>
</evidence>
<evidence type="ECO:0000255" key="4"/>
<evidence type="ECO:0000255" key="5">
    <source>
        <dbReference type="PROSITE-ProRule" id="PRU00029"/>
    </source>
</evidence>
<evidence type="ECO:0000269" key="6">
    <source>
    </source>
</evidence>
<evidence type="ECO:0000269" key="7">
    <source>
    </source>
</evidence>
<evidence type="ECO:0000269" key="8">
    <source>
    </source>
</evidence>
<evidence type="ECO:0000303" key="9">
    <source>
    </source>
</evidence>
<evidence type="ECO:0000303" key="10">
    <source>
    </source>
</evidence>
<evidence type="ECO:0000305" key="11"/>
<evidence type="ECO:0000312" key="12">
    <source>
        <dbReference type="EMBL" id="AAH89127.1"/>
    </source>
</evidence>
<evidence type="ECO:0000312" key="13">
    <source>
        <dbReference type="EMBL" id="AAN76690.1"/>
    </source>
</evidence>
<evidence type="ECO:0000312" key="14">
    <source>
        <dbReference type="EMBL" id="BAE02678.1"/>
    </source>
</evidence>
<gene>
    <name type="primary">birc5.1-b</name>
    <name evidence="10" type="synonym">su2</name>
</gene>
<sequence length="160" mass="18803">MYSAKNRFVQSVQRLQDFRNMYDYEARLATFADWPFTENCKCTPENMAKAGFVHCPTENEPDVACCFFCLKELEGWEPDDDPWNEHSKRSVNCGFLSLTKCVNDLTMEGFLRLEGDRIKSFYRKFSTVVLQYVEEEMTAATKRLLEYFSNQHQCSIDLDH</sequence>
<reference evidence="11 13" key="1">
    <citation type="journal article" date="2002" name="Dev. Dyn.">
        <title>Survivin mRNA is down-regulated during early Xenopus laevis embryogenesis.</title>
        <authorList>
            <person name="Murphy C.R."/>
            <person name="Sabel J.L."/>
            <person name="Sandler A.D."/>
            <person name="Dagle J.M."/>
        </authorList>
    </citation>
    <scope>NUCLEOTIDE SEQUENCE [MRNA]</scope>
    <scope>DEVELOPMENTAL STAGE</scope>
    <source>
        <tissue evidence="6">Oocyte</tissue>
    </source>
</reference>
<reference evidence="11" key="2">
    <citation type="journal article" date="2006" name="Differentiation">
        <title>Survivin increased vascular development during Xenopus ontogenesis.</title>
        <authorList>
            <person name="Du Pasquier D."/>
            <person name="Phung A.C."/>
            <person name="Ymlahi-Ouazzani Q."/>
            <person name="Sinzelle L."/>
            <person name="Ballagny C."/>
            <person name="Bronchain O."/>
            <person name="Du Pasquier L."/>
            <person name="Mazabraud A."/>
        </authorList>
    </citation>
    <scope>NUCLEOTIDE SEQUENCE [MRNA]</scope>
    <scope>DEVELOPMENTAL STAGE</scope>
    <source>
        <tissue evidence="8">Oocyte</tissue>
    </source>
</reference>
<reference key="3">
    <citation type="journal article" date="2005" name="FEBS J.">
        <title>Apoptosis-inhibiting activities of BIR family proteins in Xenopus egg extracts.</title>
        <authorList>
            <person name="Tsuchiya Y."/>
            <person name="Murai S."/>
            <person name="Yamashita S."/>
        </authorList>
    </citation>
    <scope>NUCLEOTIDE SEQUENCE [MRNA]</scope>
    <scope>FUNCTION</scope>
    <source>
        <tissue>Oocyte</tissue>
    </source>
</reference>
<reference evidence="14" key="4">
    <citation type="submission" date="2005-01" db="EMBL/GenBank/DDBJ databases">
        <authorList>
            <consortium name="NIH - Xenopus Gene Collection (XGC) project"/>
        </authorList>
    </citation>
    <scope>NUCLEOTIDE SEQUENCE [LARGE SCALE MRNA]</scope>
    <source>
        <tissue evidence="12">Egg</tissue>
    </source>
</reference>
<reference evidence="11" key="5">
    <citation type="journal article" date="2005" name="Int. Rev. Cytol.">
        <title>Survivin: a protein with dual roles in mitosis and apoptosis.</title>
        <authorList>
            <person name="Wheatley S.P."/>
            <person name="McNeish I.A."/>
        </authorList>
    </citation>
    <scope>REVIEW</scope>
</reference>